<evidence type="ECO:0000305" key="1"/>
<accession>P17048</accession>
<accession>Q42398</accession>
<accession>Q6ZIX5</accession>
<proteinExistence type="evidence at transcript level"/>
<sequence>MKIIFVFALLAIVACNASARFDPLSQSYRQYQLQSHLLLQQQVLSPCSEFVRQQYSIVATPFWQPATFQLINNQVMQQQCCQQLRLVAQQSHYQAISIVQAIVQQLQLQQFSGVYFDQTQAQAQTLLTFNLPSICGIYPNYYSAPRSIATVGGVWY</sequence>
<organism>
    <name type="scientific">Oryza sativa subsp. japonica</name>
    <name type="common">Rice</name>
    <dbReference type="NCBI Taxonomy" id="39947"/>
    <lineage>
        <taxon>Eukaryota</taxon>
        <taxon>Viridiplantae</taxon>
        <taxon>Streptophyta</taxon>
        <taxon>Embryophyta</taxon>
        <taxon>Tracheophyta</taxon>
        <taxon>Spermatophyta</taxon>
        <taxon>Magnoliopsida</taxon>
        <taxon>Liliopsida</taxon>
        <taxon>Poales</taxon>
        <taxon>Poaceae</taxon>
        <taxon>BOP clade</taxon>
        <taxon>Oryzoideae</taxon>
        <taxon>Oryzeae</taxon>
        <taxon>Oryzinae</taxon>
        <taxon>Oryza</taxon>
        <taxon>Oryza sativa</taxon>
    </lineage>
</organism>
<name>PRO25_ORYSJ</name>
<comment type="function">
    <text>Seed storage protein; serves as a source of nitrogen, carbon and sulfur for the young developing seedling.</text>
</comment>
<comment type="subcellular location">
    <subcellularLocation>
        <location>Vacuole</location>
        <location>Aleurone grain</location>
    </subcellularLocation>
    <text>In rice, prolamin accumulates as a type I protein body which originates directly from the endoplasmic reticulum.</text>
</comment>
<comment type="similarity">
    <text evidence="1">Belongs to the prolamin family.</text>
</comment>
<gene>
    <name type="primary">PROLM25</name>
    <name type="synonym">RP6</name>
    <name type="ordered locus">Os07g0206400</name>
    <name type="ordered locus">LOC_Os07g10570</name>
    <name type="ORF">OJ1119_B04.14</name>
</gene>
<protein>
    <recommendedName>
        <fullName>13 kDa prolamin C</fullName>
    </recommendedName>
</protein>
<keyword id="KW-1185">Reference proteome</keyword>
<keyword id="KW-0708">Seed storage protein</keyword>
<keyword id="KW-0732">Signal</keyword>
<keyword id="KW-0758">Storage protein</keyword>
<keyword id="KW-0926">Vacuole</keyword>
<dbReference type="EMBL" id="X14392">
    <property type="protein sequence ID" value="CAA32565.1"/>
    <property type="molecule type" value="mRNA"/>
</dbReference>
<dbReference type="EMBL" id="X65064">
    <property type="protein sequence ID" value="CAA46197.1"/>
    <property type="molecule type" value="Genomic_DNA"/>
</dbReference>
<dbReference type="EMBL" id="D63901">
    <property type="protein sequence ID" value="BAA09940.1"/>
    <property type="molecule type" value="Genomic_DNA"/>
</dbReference>
<dbReference type="EMBL" id="AP003943">
    <property type="protein sequence ID" value="BAC83235.1"/>
    <property type="molecule type" value="Genomic_DNA"/>
</dbReference>
<dbReference type="EMBL" id="AP014963">
    <property type="protein sequence ID" value="BAT00548.1"/>
    <property type="molecule type" value="Genomic_DNA"/>
</dbReference>
<dbReference type="PIR" id="S09249">
    <property type="entry name" value="S09249"/>
</dbReference>
<dbReference type="FunCoup" id="P17048">
    <property type="interactions" value="20"/>
</dbReference>
<dbReference type="PaxDb" id="39947-P17048"/>
<dbReference type="EnsemblPlants" id="Os07t0206400-01">
    <property type="protein sequence ID" value="Os07t0206400-01"/>
    <property type="gene ID" value="Os07g0206400"/>
</dbReference>
<dbReference type="Gramene" id="Os07t0206400-01">
    <property type="protein sequence ID" value="Os07t0206400-01"/>
    <property type="gene ID" value="Os07g0206400"/>
</dbReference>
<dbReference type="HOGENOM" id="CLU_081977_1_1_1"/>
<dbReference type="InParanoid" id="P17048"/>
<dbReference type="OMA" id="EFLQHEC"/>
<dbReference type="Proteomes" id="UP000000763">
    <property type="component" value="Chromosome 7"/>
</dbReference>
<dbReference type="Proteomes" id="UP000059680">
    <property type="component" value="Chromosome 7"/>
</dbReference>
<dbReference type="ExpressionAtlas" id="P17048">
    <property type="expression patterns" value="baseline and differential"/>
</dbReference>
<dbReference type="GO" id="GO:0033095">
    <property type="term" value="C:aleurone grain"/>
    <property type="evidence" value="ECO:0007669"/>
    <property type="project" value="UniProtKB-SubCell"/>
</dbReference>
<dbReference type="GO" id="GO:0005773">
    <property type="term" value="C:vacuole"/>
    <property type="evidence" value="ECO:0007669"/>
    <property type="project" value="UniProtKB-KW"/>
</dbReference>
<dbReference type="GO" id="GO:0045735">
    <property type="term" value="F:nutrient reservoir activity"/>
    <property type="evidence" value="ECO:0007669"/>
    <property type="project" value="UniProtKB-KW"/>
</dbReference>
<dbReference type="Gene3D" id="1.10.110.10">
    <property type="entry name" value="Plant lipid-transfer and hydrophobic proteins"/>
    <property type="match status" value="1"/>
</dbReference>
<dbReference type="InterPro" id="IPR036312">
    <property type="entry name" value="Bifun_inhib/LTP/seed_sf"/>
</dbReference>
<dbReference type="InterPro" id="IPR016140">
    <property type="entry name" value="Bifunc_inhib/LTP/seed_store"/>
</dbReference>
<dbReference type="InterPro" id="IPR001954">
    <property type="entry name" value="Glia_glutenin"/>
</dbReference>
<dbReference type="PANTHER" id="PTHR33454">
    <property type="entry name" value="PROLAMIN PPROL 14P"/>
    <property type="match status" value="1"/>
</dbReference>
<dbReference type="PANTHER" id="PTHR33454:SF19">
    <property type="entry name" value="PROLAMIN PPROL 14P"/>
    <property type="match status" value="1"/>
</dbReference>
<dbReference type="Pfam" id="PF13016">
    <property type="entry name" value="Gliadin"/>
    <property type="match status" value="1"/>
</dbReference>
<dbReference type="PRINTS" id="PR00208">
    <property type="entry name" value="GLIADGLUTEN"/>
</dbReference>
<dbReference type="SMART" id="SM00499">
    <property type="entry name" value="AAI"/>
    <property type="match status" value="1"/>
</dbReference>
<dbReference type="SUPFAM" id="SSF47699">
    <property type="entry name" value="Bifunctional inhibitor/lipid-transfer protein/seed storage 2S albumin"/>
    <property type="match status" value="1"/>
</dbReference>
<reference key="1">
    <citation type="journal article" date="1990" name="Mol. Gen. Genet.">
        <title>Cloning and characterization of a cDNA encoding a rice 13 kDa prolamin.</title>
        <authorList>
            <person name="Masumura T."/>
            <person name="Hibino T."/>
            <person name="Kidzu K."/>
            <person name="Mitsukawa N."/>
            <person name="Tanaka K."/>
            <person name="Fujii S."/>
        </authorList>
    </citation>
    <scope>NUCLEOTIDE SEQUENCE [MRNA]</scope>
    <source>
        <strain>cv. Nipponbare</strain>
        <tissue>Seed</tissue>
    </source>
</reference>
<reference key="2">
    <citation type="journal article" date="1993" name="Plant Physiol.">
        <title>Nucleotide sequence of a rice (Oryza sativa) prolamin storage protein gene, RP6.</title>
        <authorList>
            <person name="Wen T.N."/>
            <person name="Shyur L.F."/>
            <person name="Su J.C."/>
            <person name="Chen C.S."/>
        </authorList>
    </citation>
    <scope>NUCLEOTIDE SEQUENCE [GENOMIC DNA]</scope>
    <source>
        <strain>cv. Tainung 67</strain>
        <tissue>Seedling</tissue>
    </source>
</reference>
<reference key="3">
    <citation type="journal article" date="1996" name="Biosci. Biotechnol. Biochem.">
        <title>Cloning and sequencing of a rice gene encoding the 13-kDa prolamin polypeptide.</title>
        <authorList>
            <person name="Sha S."/>
            <person name="Sugiyama Y."/>
            <person name="Mitsukawa N."/>
            <person name="Masumura T."/>
            <person name="Tanaka K."/>
        </authorList>
    </citation>
    <scope>NUCLEOTIDE SEQUENCE [GENOMIC DNA]</scope>
    <source>
        <strain>cv. Nipponbare</strain>
    </source>
</reference>
<reference key="4">
    <citation type="journal article" date="2005" name="Nature">
        <title>The map-based sequence of the rice genome.</title>
        <authorList>
            <consortium name="International rice genome sequencing project (IRGSP)"/>
        </authorList>
    </citation>
    <scope>NUCLEOTIDE SEQUENCE [LARGE SCALE GENOMIC DNA]</scope>
    <source>
        <strain>cv. Nipponbare</strain>
    </source>
</reference>
<reference key="5">
    <citation type="journal article" date="2013" name="Rice">
        <title>Improvement of the Oryza sativa Nipponbare reference genome using next generation sequence and optical map data.</title>
        <authorList>
            <person name="Kawahara Y."/>
            <person name="de la Bastide M."/>
            <person name="Hamilton J.P."/>
            <person name="Kanamori H."/>
            <person name="McCombie W.R."/>
            <person name="Ouyang S."/>
            <person name="Schwartz D.C."/>
            <person name="Tanaka T."/>
            <person name="Wu J."/>
            <person name="Zhou S."/>
            <person name="Childs K.L."/>
            <person name="Davidson R.M."/>
            <person name="Lin H."/>
            <person name="Quesada-Ocampo L."/>
            <person name="Vaillancourt B."/>
            <person name="Sakai H."/>
            <person name="Lee S.S."/>
            <person name="Kim J."/>
            <person name="Numa H."/>
            <person name="Itoh T."/>
            <person name="Buell C.R."/>
            <person name="Matsumoto T."/>
        </authorList>
    </citation>
    <scope>GENOME REANNOTATION</scope>
    <source>
        <strain>cv. Nipponbare</strain>
    </source>
</reference>
<reference key="6">
    <citation type="journal article" date="2007" name="Plant J.">
        <title>Small cysteine-rich peptides resembling antimicrobial peptides have been under-predicted in plants.</title>
        <authorList>
            <person name="Silverstein K.A.T."/>
            <person name="Moskal W.A. Jr."/>
            <person name="Wu H.C."/>
            <person name="Underwood B.A."/>
            <person name="Graham M.A."/>
            <person name="Town C.D."/>
            <person name="VandenBosch K.A."/>
        </authorList>
    </citation>
    <scope>GENE FAMILY</scope>
    <scope>NOMENCLATURE</scope>
</reference>
<feature type="signal peptide">
    <location>
        <begin position="1"/>
        <end position="19"/>
    </location>
</feature>
<feature type="chain" id="PRO_0000032262" description="13 kDa prolamin C">
    <location>
        <begin position="20"/>
        <end position="156"/>
    </location>
</feature>
<feature type="region of interest" description="Octapeptide unique to cereal prolamins">
    <location>
        <begin position="77"/>
        <end position="84"/>
    </location>
</feature>
<feature type="sequence conflict" description="In Ref. 1; CAA32565." evidence="1" ref="1">
    <original>A</original>
    <variation>R</variation>
    <location>
        <position position="17"/>
    </location>
</feature>